<dbReference type="EMBL" id="AJ720149">
    <property type="protein sequence ID" value="CAG31808.1"/>
    <property type="molecule type" value="mRNA"/>
</dbReference>
<dbReference type="RefSeq" id="NP_001012926.1">
    <property type="nucleotide sequence ID" value="NM_001012908.1"/>
</dbReference>
<dbReference type="SMR" id="Q5ZKD5"/>
<dbReference type="FunCoup" id="Q5ZKD5">
    <property type="interactions" value="1533"/>
</dbReference>
<dbReference type="STRING" id="9031.ENSGALP00000049327"/>
<dbReference type="GlyGen" id="Q5ZKD5">
    <property type="glycosylation" value="2 sites"/>
</dbReference>
<dbReference type="PaxDb" id="9031-ENSGALP00000012282"/>
<dbReference type="GeneID" id="423845"/>
<dbReference type="KEGG" id="gga:423845"/>
<dbReference type="CTD" id="23223"/>
<dbReference type="VEuPathDB" id="HostDB:geneid_423845"/>
<dbReference type="eggNOG" id="KOG1248">
    <property type="taxonomic scope" value="Eukaryota"/>
</dbReference>
<dbReference type="InParanoid" id="Q5ZKD5"/>
<dbReference type="OrthoDB" id="2192888at2759"/>
<dbReference type="PhylomeDB" id="Q5ZKD5"/>
<dbReference type="PRO" id="PR:Q5ZKD5"/>
<dbReference type="Proteomes" id="UP000000539">
    <property type="component" value="Unassembled WGS sequence"/>
</dbReference>
<dbReference type="GO" id="GO:0031965">
    <property type="term" value="C:nuclear membrane"/>
    <property type="evidence" value="ECO:0007669"/>
    <property type="project" value="UniProtKB-SubCell"/>
</dbReference>
<dbReference type="GO" id="GO:0005730">
    <property type="term" value="C:nucleolus"/>
    <property type="evidence" value="ECO:0000318"/>
    <property type="project" value="GO_Central"/>
</dbReference>
<dbReference type="GO" id="GO:0003723">
    <property type="term" value="F:RNA binding"/>
    <property type="evidence" value="ECO:0000318"/>
    <property type="project" value="GO_Central"/>
</dbReference>
<dbReference type="Gene3D" id="1.25.10.10">
    <property type="entry name" value="Leucine-rich Repeat Variant"/>
    <property type="match status" value="2"/>
</dbReference>
<dbReference type="InterPro" id="IPR011989">
    <property type="entry name" value="ARM-like"/>
</dbReference>
<dbReference type="InterPro" id="IPR016024">
    <property type="entry name" value="ARM-type_fold"/>
</dbReference>
<dbReference type="InterPro" id="IPR052087">
    <property type="entry name" value="RRP12"/>
</dbReference>
<dbReference type="InterPro" id="IPR012978">
    <property type="entry name" value="RRP12-like_dom"/>
</dbReference>
<dbReference type="PANTHER" id="PTHR48287">
    <property type="entry name" value="ARM REPEAT SUPERFAMILY PROTEIN"/>
    <property type="match status" value="1"/>
</dbReference>
<dbReference type="PANTHER" id="PTHR48287:SF1">
    <property type="entry name" value="ARM REPEAT SUPERFAMILY PROTEIN"/>
    <property type="match status" value="1"/>
</dbReference>
<dbReference type="Pfam" id="PF08161">
    <property type="entry name" value="RRP12_HEAT"/>
    <property type="match status" value="1"/>
</dbReference>
<dbReference type="SUPFAM" id="SSF48371">
    <property type="entry name" value="ARM repeat"/>
    <property type="match status" value="1"/>
</dbReference>
<protein>
    <recommendedName>
        <fullName>RRP12-like protein</fullName>
    </recommendedName>
</protein>
<sequence>MARCGRLRAGTAAKLRRWRKGHSSDCNPETRRHRLAARSRFYSRPTEKSNLTVDAVKLHNELQSGSLRVERPSGSSQLPMEEGDAGEAATERSSGTFLSGLSDCTNVTFSRVQRFWESNSAAHKEICAVLAAVTDVIRSQGGKETETEYFAALMTTLEAVDSPESVAAVAYLLNLVLKRVPSPVLIKKFSDASKAFMNIISSQACSGSTSALRWVLSCLATLLRKQDLAAWSYPVTLQVYHGLLSFCVHTKPKVRKAAQHGVCSVLRGSEFMFGDEAPEHHPAAPSSAKFCVQEIEKAGGTKEATTTLHVLALLRDLLPCFPAAVLKTCCETLLRVMTLSHVLVTACAMQAFHSLFSAQPRTSCLPAELNAQIITALYDYVPSANDLQPLLTWLTTMERAHVNLGRLQKDLCWAHLPRLFSATMNCFLSPHLQVVAAAAQTLETLLNECIAPHMDELGNVSASTPAPGSYLCKMFRSVEEGLTYRFHAAWDGVLQVLEVFFEVCGKQCHPIMRKCLQSLCDLRLSPHFPYTTEVDQAVGAAVGAMGPEVLLEAVPLQIDGKEETLDFPRSWLLPVLRDYVQGARLGFFTSYFLPLAATLKSRALEFAQAGKSLESKIYDTLQWQVWTLLPGFCTRPTDVVEAFKGLARTLGMAISERPDLRPTVCQALRTLIHHGCGTDAERAEVGRFAKNFLPILFNVYSQPEEDGGSSSQRRSVLDTVRAYLTITDPQLGCGFLQKASEKLTSPESSEFARLSILDLVVAMSPYANEQALGSLYRTIQPSLQSKDHSMQKKAYRVLEEVCAAPHAPCQAFVHSHLEELQAVLLDSLKSAASPAKRPRLKCLFHIMKQLSAEHEPFVTALVPEVILCTKEVSVGARKNAFMLLVEMGHAFIRFGPTPQEAMERFLLLVYAGLTGSVTMISCTVLALTRLFFEFRDHMELNVVEQLLQNICLLLGSRTRDVVKAALGFIKVVLLLVDTTLLAKHVQTMLEAVGSLSDDMRRHFRMKLRNLFTKFIRKFGFELVQGLLPAEFHKVLVNIRKAEARSRKQRALRQAAAEAEEEEAPAQPKGDSMEEILADSEEEEEEEEERRRGKVRKKQARQKGQAWLKEGEEDEPLNFLDPNVSQRVLATEPSLKKSRGVKHDFQVSEDGRLIIHDEEEEVDNDEAKGVEEEVADVLQEVGLRSKKSQKRRFREEPDDDEPETGTYSQYRAGGSGIHRPLDKKPAFGAEYRSKKGKGDVKKKGQLDPYAYIPLNRAKLNKRKQAKMQGQFKGLMKGAQRGAKAGRKNRLKDRRP</sequence>
<accession>Q5ZKD5</accession>
<name>RRP12_CHICK</name>
<gene>
    <name type="primary">RRP12</name>
    <name type="ORF">RCJMB04_11j1</name>
</gene>
<keyword id="KW-0472">Membrane</keyword>
<keyword id="KW-0539">Nucleus</keyword>
<keyword id="KW-1185">Reference proteome</keyword>
<keyword id="KW-0812">Transmembrane</keyword>
<keyword id="KW-1133">Transmembrane helix</keyword>
<reference key="1">
    <citation type="journal article" date="2005" name="Genome Biol.">
        <title>Full-length cDNAs from chicken bursal lymphocytes to facilitate gene function analysis.</title>
        <authorList>
            <person name="Caldwell R.B."/>
            <person name="Kierzek A.M."/>
            <person name="Arakawa H."/>
            <person name="Bezzubov Y."/>
            <person name="Zaim J."/>
            <person name="Fiedler P."/>
            <person name="Kutter S."/>
            <person name="Blagodatski A."/>
            <person name="Kostovska D."/>
            <person name="Koter M."/>
            <person name="Plachy J."/>
            <person name="Carninci P."/>
            <person name="Hayashizaki Y."/>
            <person name="Buerstedde J.-M."/>
        </authorList>
    </citation>
    <scope>NUCLEOTIDE SEQUENCE [LARGE SCALE MRNA]</scope>
    <source>
        <strain>CB</strain>
        <tissue>Bursa of Fabricius</tissue>
    </source>
</reference>
<comment type="subcellular location">
    <subcellularLocation>
        <location evidence="1">Nucleus</location>
        <location evidence="1">Nucleolus</location>
    </subcellularLocation>
    <subcellularLocation>
        <location evidence="1">Nucleus membrane</location>
        <topology evidence="1">Single-pass membrane protein</topology>
    </subcellularLocation>
</comment>
<comment type="similarity">
    <text evidence="4">Belongs to the RRP12 family.</text>
</comment>
<proteinExistence type="evidence at transcript level"/>
<organism>
    <name type="scientific">Gallus gallus</name>
    <name type="common">Chicken</name>
    <dbReference type="NCBI Taxonomy" id="9031"/>
    <lineage>
        <taxon>Eukaryota</taxon>
        <taxon>Metazoa</taxon>
        <taxon>Chordata</taxon>
        <taxon>Craniata</taxon>
        <taxon>Vertebrata</taxon>
        <taxon>Euteleostomi</taxon>
        <taxon>Archelosauria</taxon>
        <taxon>Archosauria</taxon>
        <taxon>Dinosauria</taxon>
        <taxon>Saurischia</taxon>
        <taxon>Theropoda</taxon>
        <taxon>Coelurosauria</taxon>
        <taxon>Aves</taxon>
        <taxon>Neognathae</taxon>
        <taxon>Galloanserae</taxon>
        <taxon>Galliformes</taxon>
        <taxon>Phasianidae</taxon>
        <taxon>Phasianinae</taxon>
        <taxon>Gallus</taxon>
    </lineage>
</organism>
<feature type="chain" id="PRO_0000050770" description="RRP12-like protein">
    <location>
        <begin position="1"/>
        <end position="1294"/>
    </location>
</feature>
<feature type="transmembrane region" description="Helical" evidence="2">
    <location>
        <begin position="905"/>
        <end position="925"/>
    </location>
</feature>
<feature type="region of interest" description="Disordered" evidence="3">
    <location>
        <begin position="66"/>
        <end position="92"/>
    </location>
</feature>
<feature type="region of interest" description="Disordered" evidence="3">
    <location>
        <begin position="1049"/>
        <end position="1144"/>
    </location>
</feature>
<feature type="region of interest" description="Disordered" evidence="3">
    <location>
        <begin position="1178"/>
        <end position="1225"/>
    </location>
</feature>
<feature type="region of interest" description="Disordered" evidence="3">
    <location>
        <begin position="1255"/>
        <end position="1294"/>
    </location>
</feature>
<feature type="compositionally biased region" description="Acidic residues" evidence="3">
    <location>
        <begin position="1072"/>
        <end position="1087"/>
    </location>
</feature>
<feature type="compositionally biased region" description="Basic residues" evidence="3">
    <location>
        <begin position="1091"/>
        <end position="1100"/>
    </location>
</feature>
<feature type="compositionally biased region" description="Basic residues" evidence="3">
    <location>
        <begin position="1282"/>
        <end position="1294"/>
    </location>
</feature>
<evidence type="ECO:0000250" key="1"/>
<evidence type="ECO:0000255" key="2"/>
<evidence type="ECO:0000256" key="3">
    <source>
        <dbReference type="SAM" id="MobiDB-lite"/>
    </source>
</evidence>
<evidence type="ECO:0000305" key="4"/>